<comment type="function">
    <text>Resistance to tetracycline by an active tetracycline efflux. This is an energy-dependent process that decreases the accumulation of the antibiotic in whole cells. This protein functions as a metal-tetracycline/H(+) antiporter.</text>
</comment>
<comment type="subcellular location">
    <subcellularLocation>
        <location>Cell membrane</location>
        <topology>Multi-pass membrane protein</topology>
    </subcellularLocation>
</comment>
<comment type="similarity">
    <text evidence="3">Belongs to the major facilitator superfamily. TCR/Tet family.</text>
</comment>
<accession>P14551</accession>
<geneLocation type="plasmid"/>
<proteinExistence type="inferred from homology"/>
<dbReference type="EMBL" id="M20370">
    <property type="protein sequence ID" value="AAA26831.1"/>
    <property type="molecule type" value="Genomic_DNA"/>
</dbReference>
<dbReference type="PIR" id="A46567">
    <property type="entry name" value="A46567"/>
</dbReference>
<dbReference type="SMR" id="P14551"/>
<dbReference type="GO" id="GO:0005886">
    <property type="term" value="C:plasma membrane"/>
    <property type="evidence" value="ECO:0007669"/>
    <property type="project" value="UniProtKB-SubCell"/>
</dbReference>
<dbReference type="GO" id="GO:0015297">
    <property type="term" value="F:antiporter activity"/>
    <property type="evidence" value="ECO:0007669"/>
    <property type="project" value="UniProtKB-KW"/>
</dbReference>
<dbReference type="GO" id="GO:1902600">
    <property type="term" value="P:proton transmembrane transport"/>
    <property type="evidence" value="ECO:0007669"/>
    <property type="project" value="UniProtKB-KW"/>
</dbReference>
<dbReference type="GO" id="GO:0046677">
    <property type="term" value="P:response to antibiotic"/>
    <property type="evidence" value="ECO:0007669"/>
    <property type="project" value="UniProtKB-KW"/>
</dbReference>
<dbReference type="Gene3D" id="1.20.1250.20">
    <property type="entry name" value="MFS general substrate transporter like domains"/>
    <property type="match status" value="1"/>
</dbReference>
<dbReference type="InterPro" id="IPR011701">
    <property type="entry name" value="MFS"/>
</dbReference>
<dbReference type="InterPro" id="IPR036259">
    <property type="entry name" value="MFS_trans_sf"/>
</dbReference>
<dbReference type="PANTHER" id="PTHR23501:SF197">
    <property type="entry name" value="COMD"/>
    <property type="match status" value="1"/>
</dbReference>
<dbReference type="PANTHER" id="PTHR23501">
    <property type="entry name" value="MAJOR FACILITATOR SUPERFAMILY"/>
    <property type="match status" value="1"/>
</dbReference>
<dbReference type="Pfam" id="PF07690">
    <property type="entry name" value="MFS_1"/>
    <property type="match status" value="1"/>
</dbReference>
<dbReference type="SUPFAM" id="SSF103473">
    <property type="entry name" value="MFS general substrate transporter"/>
    <property type="match status" value="1"/>
</dbReference>
<protein>
    <recommendedName>
        <fullName>Tetracycline resistance determinant</fullName>
    </recommendedName>
    <alternativeName>
        <fullName>TET347</fullName>
    </alternativeName>
</protein>
<keyword id="KW-0046">Antibiotic resistance</keyword>
<keyword id="KW-0050">Antiport</keyword>
<keyword id="KW-1003">Cell membrane</keyword>
<keyword id="KW-0375">Hydrogen ion transport</keyword>
<keyword id="KW-0406">Ion transport</keyword>
<keyword id="KW-0472">Membrane</keyword>
<keyword id="KW-0614">Plasmid</keyword>
<keyword id="KW-0812">Transmembrane</keyword>
<keyword id="KW-1133">Transmembrane helix</keyword>
<keyword id="KW-0813">Transport</keyword>
<feature type="chain" id="PRO_0000173388" description="Tetracycline resistance determinant">
    <location>
        <begin position="1"/>
        <end position="347"/>
    </location>
</feature>
<feature type="transmembrane region" description="Helical" evidence="1">
    <location>
        <begin position="3"/>
        <end position="20"/>
    </location>
</feature>
<feature type="transmembrane region" description="Helical" evidence="1">
    <location>
        <begin position="30"/>
        <end position="52"/>
    </location>
</feature>
<feature type="transmembrane region" description="Helical" evidence="1">
    <location>
        <begin position="73"/>
        <end position="95"/>
    </location>
</feature>
<feature type="transmembrane region" description="Helical" evidence="1">
    <location>
        <begin position="108"/>
        <end position="130"/>
    </location>
</feature>
<feature type="transmembrane region" description="Helical" evidence="1">
    <location>
        <begin position="137"/>
        <end position="156"/>
    </location>
</feature>
<feature type="transmembrane region" description="Helical" evidence="1">
    <location>
        <begin position="161"/>
        <end position="183"/>
    </location>
</feature>
<feature type="transmembrane region" description="Helical" evidence="1">
    <location>
        <begin position="204"/>
        <end position="226"/>
    </location>
</feature>
<feature type="transmembrane region" description="Helical" evidence="1">
    <location>
        <begin position="294"/>
        <end position="316"/>
    </location>
</feature>
<feature type="region of interest" description="Disordered" evidence="2">
    <location>
        <begin position="321"/>
        <end position="347"/>
    </location>
</feature>
<organism>
    <name type="scientific">Streptomyces rimosus</name>
    <dbReference type="NCBI Taxonomy" id="1927"/>
    <lineage>
        <taxon>Bacteria</taxon>
        <taxon>Bacillati</taxon>
        <taxon>Actinomycetota</taxon>
        <taxon>Actinomycetes</taxon>
        <taxon>Kitasatosporales</taxon>
        <taxon>Streptomycetaceae</taxon>
        <taxon>Streptomyces</taxon>
    </lineage>
</organism>
<sequence length="347" mass="35818">MDVLGAAALALFLVPLLIVAEQGRTWGWGSPAALALFALGAAGLAVFIPVELRRGDEAILPLGLFRRGSIALCSAVNFTIGVGIFGTVTTLPLFLQMVQGRTPTQAGLVVIPFMLGTIASQMVSGKLIASSGRFKKLAIVGLGSMAGALLAMATTGATTPMWGIVLIVLWLGVGIGLSQTVITSPMQNSAPKSQLGVANGASACAGQIGGSTGIAVLFSVMFAVALGRLADLLHTPRYERLLTDPAITGDPANHRFLDMAESGQGAGINLDDTSLLNGIDARLMQPVTDSFAHGFHIMFLPGGVVLLAGFVMTWFLRELQEETAPEEERPAESGAGAKNGPLPASDA</sequence>
<reference key="1">
    <citation type="journal article" date="1988" name="J. Gen. Microbiol.">
        <title>Cloning, expression in Escherichia coli and nucleotide sequence of a tetracycline-resistance gene from Streptomyces rimosus.</title>
        <authorList>
            <person name="Reynes J.-P."/>
            <person name="Calmels T."/>
            <person name="Drocourt D."/>
            <person name="Tiraby G."/>
        </authorList>
    </citation>
    <scope>NUCLEOTIDE SEQUENCE [GENOMIC DNA]</scope>
</reference>
<evidence type="ECO:0000255" key="1"/>
<evidence type="ECO:0000256" key="2">
    <source>
        <dbReference type="SAM" id="MobiDB-lite"/>
    </source>
</evidence>
<evidence type="ECO:0000305" key="3"/>
<gene>
    <name type="primary">tetB</name>
    <name type="synonym">otrB</name>
</gene>
<name>TCR_STRRM</name>